<feature type="chain" id="PRO_0000362740" description="NADH-quinone oxidoreductase subunit A">
    <location>
        <begin position="1"/>
        <end position="137"/>
    </location>
</feature>
<feature type="transmembrane region" description="Helical" evidence="1">
    <location>
        <begin position="12"/>
        <end position="32"/>
    </location>
</feature>
<feature type="transmembrane region" description="Helical" evidence="1">
    <location>
        <begin position="68"/>
        <end position="88"/>
    </location>
</feature>
<feature type="transmembrane region" description="Helical" evidence="1">
    <location>
        <begin position="94"/>
        <end position="114"/>
    </location>
</feature>
<reference key="1">
    <citation type="submission" date="2007-04" db="EMBL/GenBank/DDBJ databases">
        <title>Complete sequence of Pseudomonas mendocina ymp.</title>
        <authorList>
            <consortium name="US DOE Joint Genome Institute"/>
            <person name="Copeland A."/>
            <person name="Lucas S."/>
            <person name="Lapidus A."/>
            <person name="Barry K."/>
            <person name="Glavina del Rio T."/>
            <person name="Dalin E."/>
            <person name="Tice H."/>
            <person name="Pitluck S."/>
            <person name="Kiss H."/>
            <person name="Brettin T."/>
            <person name="Detter J.C."/>
            <person name="Bruce D."/>
            <person name="Han C."/>
            <person name="Schmutz J."/>
            <person name="Larimer F."/>
            <person name="Land M."/>
            <person name="Hauser L."/>
            <person name="Kyrpides N."/>
            <person name="Mikhailova N."/>
            <person name="Hersman L."/>
            <person name="Dubois J."/>
            <person name="Maurice P."/>
            <person name="Richardson P."/>
        </authorList>
    </citation>
    <scope>NUCLEOTIDE SEQUENCE [LARGE SCALE GENOMIC DNA]</scope>
    <source>
        <strain>ymp</strain>
    </source>
</reference>
<protein>
    <recommendedName>
        <fullName evidence="1">NADH-quinone oxidoreductase subunit A</fullName>
        <ecNumber evidence="1">7.1.1.-</ecNumber>
    </recommendedName>
    <alternativeName>
        <fullName evidence="1">NADH dehydrogenase I subunit A</fullName>
    </alternativeName>
    <alternativeName>
        <fullName evidence="1">NDH-1 subunit A</fullName>
    </alternativeName>
    <alternativeName>
        <fullName evidence="1">NUO1</fullName>
    </alternativeName>
</protein>
<accession>A4XV02</accession>
<evidence type="ECO:0000255" key="1">
    <source>
        <dbReference type="HAMAP-Rule" id="MF_01394"/>
    </source>
</evidence>
<comment type="function">
    <text evidence="1">NDH-1 shuttles electrons from NADH, via FMN and iron-sulfur (Fe-S) centers, to quinones in the respiratory chain. The immediate electron acceptor for the enzyme in this species is believed to be ubiquinone. Couples the redox reaction to proton translocation (for every two electrons transferred, four hydrogen ions are translocated across the cytoplasmic membrane), and thus conserves the redox energy in a proton gradient.</text>
</comment>
<comment type="catalytic activity">
    <reaction evidence="1">
        <text>a quinone + NADH + 5 H(+)(in) = a quinol + NAD(+) + 4 H(+)(out)</text>
        <dbReference type="Rhea" id="RHEA:57888"/>
        <dbReference type="ChEBI" id="CHEBI:15378"/>
        <dbReference type="ChEBI" id="CHEBI:24646"/>
        <dbReference type="ChEBI" id="CHEBI:57540"/>
        <dbReference type="ChEBI" id="CHEBI:57945"/>
        <dbReference type="ChEBI" id="CHEBI:132124"/>
    </reaction>
</comment>
<comment type="subunit">
    <text evidence="1">NDH-1 is composed of 13 different subunits. Subunits NuoA, H, J, K, L, M, N constitute the membrane sector of the complex.</text>
</comment>
<comment type="subcellular location">
    <subcellularLocation>
        <location evidence="1">Cell inner membrane</location>
        <topology evidence="1">Multi-pass membrane protein</topology>
    </subcellularLocation>
</comment>
<comment type="similarity">
    <text evidence="1">Belongs to the complex I subunit 3 family.</text>
</comment>
<sequence length="137" mass="14973">MPDVPSTLSHDWAFAVFLLGVCGLIAFMLGVSSLLGSKAWGRSKNEPFESGMLPTGNARLRLSAKFYLVAMLFVIFDVEALFLFAWAVSVRESGWVGLVGATVFITILFAGLVYESAIGALDWAPEGRRKRQAKLKQ</sequence>
<dbReference type="EC" id="7.1.1.-" evidence="1"/>
<dbReference type="EMBL" id="CP000680">
    <property type="protein sequence ID" value="ABP85168.1"/>
    <property type="molecule type" value="Genomic_DNA"/>
</dbReference>
<dbReference type="SMR" id="A4XV02"/>
<dbReference type="STRING" id="399739.Pmen_2412"/>
<dbReference type="KEGG" id="pmy:Pmen_2412"/>
<dbReference type="PATRIC" id="fig|399739.8.peg.2434"/>
<dbReference type="eggNOG" id="COG0838">
    <property type="taxonomic scope" value="Bacteria"/>
</dbReference>
<dbReference type="HOGENOM" id="CLU_119549_2_1_6"/>
<dbReference type="OrthoDB" id="9791970at2"/>
<dbReference type="GO" id="GO:0030964">
    <property type="term" value="C:NADH dehydrogenase complex"/>
    <property type="evidence" value="ECO:0007669"/>
    <property type="project" value="TreeGrafter"/>
</dbReference>
<dbReference type="GO" id="GO:0005886">
    <property type="term" value="C:plasma membrane"/>
    <property type="evidence" value="ECO:0007669"/>
    <property type="project" value="UniProtKB-SubCell"/>
</dbReference>
<dbReference type="GO" id="GO:0008137">
    <property type="term" value="F:NADH dehydrogenase (ubiquinone) activity"/>
    <property type="evidence" value="ECO:0007669"/>
    <property type="project" value="InterPro"/>
</dbReference>
<dbReference type="GO" id="GO:0050136">
    <property type="term" value="F:NADH:ubiquinone reductase (non-electrogenic) activity"/>
    <property type="evidence" value="ECO:0007669"/>
    <property type="project" value="UniProtKB-UniRule"/>
</dbReference>
<dbReference type="GO" id="GO:0048038">
    <property type="term" value="F:quinone binding"/>
    <property type="evidence" value="ECO:0007669"/>
    <property type="project" value="UniProtKB-KW"/>
</dbReference>
<dbReference type="FunFam" id="1.20.58.1610:FF:000003">
    <property type="entry name" value="NADH-quinone oxidoreductase subunit A"/>
    <property type="match status" value="1"/>
</dbReference>
<dbReference type="Gene3D" id="1.20.58.1610">
    <property type="entry name" value="NADH:ubiquinone/plastoquinone oxidoreductase, chain 3"/>
    <property type="match status" value="1"/>
</dbReference>
<dbReference type="HAMAP" id="MF_01394">
    <property type="entry name" value="NDH1_NuoA"/>
    <property type="match status" value="1"/>
</dbReference>
<dbReference type="InterPro" id="IPR023043">
    <property type="entry name" value="NAD(P)H_OxRDtase_bac/plastid"/>
</dbReference>
<dbReference type="InterPro" id="IPR000440">
    <property type="entry name" value="NADH_UbQ/plastoQ_OxRdtase_su3"/>
</dbReference>
<dbReference type="InterPro" id="IPR038430">
    <property type="entry name" value="NDAH_ubi_oxred_su3_sf"/>
</dbReference>
<dbReference type="PANTHER" id="PTHR11058:SF21">
    <property type="entry name" value="NADH-QUINONE OXIDOREDUCTASE SUBUNIT A"/>
    <property type="match status" value="1"/>
</dbReference>
<dbReference type="PANTHER" id="PTHR11058">
    <property type="entry name" value="NADH-UBIQUINONE OXIDOREDUCTASE CHAIN 3"/>
    <property type="match status" value="1"/>
</dbReference>
<dbReference type="Pfam" id="PF00507">
    <property type="entry name" value="Oxidored_q4"/>
    <property type="match status" value="1"/>
</dbReference>
<keyword id="KW-0997">Cell inner membrane</keyword>
<keyword id="KW-1003">Cell membrane</keyword>
<keyword id="KW-0472">Membrane</keyword>
<keyword id="KW-0520">NAD</keyword>
<keyword id="KW-0874">Quinone</keyword>
<keyword id="KW-1278">Translocase</keyword>
<keyword id="KW-0812">Transmembrane</keyword>
<keyword id="KW-1133">Transmembrane helix</keyword>
<keyword id="KW-0813">Transport</keyword>
<keyword id="KW-0830">Ubiquinone</keyword>
<gene>
    <name evidence="1" type="primary">nuoA</name>
    <name type="ordered locus">Pmen_2412</name>
</gene>
<organism>
    <name type="scientific">Ectopseudomonas mendocina (strain ymp)</name>
    <name type="common">Pseudomonas mendocina</name>
    <dbReference type="NCBI Taxonomy" id="399739"/>
    <lineage>
        <taxon>Bacteria</taxon>
        <taxon>Pseudomonadati</taxon>
        <taxon>Pseudomonadota</taxon>
        <taxon>Gammaproteobacteria</taxon>
        <taxon>Pseudomonadales</taxon>
        <taxon>Pseudomonadaceae</taxon>
        <taxon>Ectopseudomonas</taxon>
    </lineage>
</organism>
<proteinExistence type="inferred from homology"/>
<name>NUOA_ECTM1</name>